<feature type="chain" id="PRO_0000132591" description="Small ribosomal subunit protein uS4c">
    <location>
        <begin position="1"/>
        <end position="201"/>
    </location>
</feature>
<feature type="domain" description="S4 RNA-binding">
    <location>
        <begin position="89"/>
        <end position="150"/>
    </location>
</feature>
<accession>Q9SMG1</accession>
<reference key="1">
    <citation type="journal article" date="2002" name="Cryptogam. Bryol.">
        <title>The systematic position of the Hypoptergiaceae (Bryopsida) inferred from rps4 gene sequences.</title>
        <authorList>
            <person name="Bloecher R."/>
            <person name="Capesius I."/>
        </authorList>
    </citation>
    <scope>NUCLEOTIDE SEQUENCE [GENOMIC DNA]</scope>
    <source>
        <tissue>Gametophyte</tissue>
    </source>
</reference>
<organism>
    <name type="scientific">Funaria hygrometrica</name>
    <name type="common">Moss</name>
    <dbReference type="NCBI Taxonomy" id="29583"/>
    <lineage>
        <taxon>Eukaryota</taxon>
        <taxon>Viridiplantae</taxon>
        <taxon>Streptophyta</taxon>
        <taxon>Embryophyta</taxon>
        <taxon>Bryophyta</taxon>
        <taxon>Bryophytina</taxon>
        <taxon>Bryopsida</taxon>
        <taxon>Funariidae</taxon>
        <taxon>Funariales</taxon>
        <taxon>Funariaceae</taxon>
        <taxon>Funaria</taxon>
    </lineage>
</organism>
<name>RR4_FUNHY</name>
<protein>
    <recommendedName>
        <fullName evidence="2">Small ribosomal subunit protein uS4c</fullName>
    </recommendedName>
    <alternativeName>
        <fullName>30S ribosomal protein S4, chloroplastic</fullName>
    </alternativeName>
</protein>
<geneLocation type="chloroplast"/>
<proteinExistence type="inferred from homology"/>
<comment type="function">
    <text evidence="1">One of the primary rRNA binding proteins, it binds directly to 16S rRNA where it nucleates assembly of the body of the 30S subunit.</text>
</comment>
<comment type="function">
    <text evidence="1">With S5 and S12 plays an important role in translational accuracy.</text>
</comment>
<comment type="subunit">
    <text evidence="1">Part of the 30S ribosomal subunit. Contacts protein S5. The interaction surface between S4 and S5 is involved in control of translational fidelity (By similarity).</text>
</comment>
<comment type="subcellular location">
    <subcellularLocation>
        <location>Plastid</location>
        <location>Chloroplast</location>
    </subcellularLocation>
</comment>
<comment type="similarity">
    <text evidence="2">Belongs to the universal ribosomal protein uS4 family.</text>
</comment>
<dbReference type="EMBL" id="AJ250120">
    <property type="protein sequence ID" value="CAB57798.1"/>
    <property type="molecule type" value="Genomic_DNA"/>
</dbReference>
<dbReference type="RefSeq" id="YP_010188778.1">
    <property type="nucleotide sequence ID" value="NC_058544.1"/>
</dbReference>
<dbReference type="SMR" id="Q9SMG1"/>
<dbReference type="GeneID" id="68620300"/>
<dbReference type="GO" id="GO:0009507">
    <property type="term" value="C:chloroplast"/>
    <property type="evidence" value="ECO:0007669"/>
    <property type="project" value="UniProtKB-SubCell"/>
</dbReference>
<dbReference type="GO" id="GO:0015935">
    <property type="term" value="C:small ribosomal subunit"/>
    <property type="evidence" value="ECO:0007669"/>
    <property type="project" value="InterPro"/>
</dbReference>
<dbReference type="GO" id="GO:0019843">
    <property type="term" value="F:rRNA binding"/>
    <property type="evidence" value="ECO:0007669"/>
    <property type="project" value="UniProtKB-UniRule"/>
</dbReference>
<dbReference type="GO" id="GO:0003735">
    <property type="term" value="F:structural constituent of ribosome"/>
    <property type="evidence" value="ECO:0007669"/>
    <property type="project" value="InterPro"/>
</dbReference>
<dbReference type="GO" id="GO:0042274">
    <property type="term" value="P:ribosomal small subunit biogenesis"/>
    <property type="evidence" value="ECO:0007669"/>
    <property type="project" value="TreeGrafter"/>
</dbReference>
<dbReference type="GO" id="GO:0006412">
    <property type="term" value="P:translation"/>
    <property type="evidence" value="ECO:0007669"/>
    <property type="project" value="UniProtKB-UniRule"/>
</dbReference>
<dbReference type="CDD" id="cd00165">
    <property type="entry name" value="S4"/>
    <property type="match status" value="1"/>
</dbReference>
<dbReference type="FunFam" id="1.10.1050.10:FF:000002">
    <property type="entry name" value="30S ribosomal protein S4, chloroplastic"/>
    <property type="match status" value="1"/>
</dbReference>
<dbReference type="FunFam" id="3.10.290.10:FF:000081">
    <property type="entry name" value="30S ribosomal protein S4, chloroplastic"/>
    <property type="match status" value="1"/>
</dbReference>
<dbReference type="Gene3D" id="1.10.1050.10">
    <property type="entry name" value="Ribosomal Protein S4 Delta 41, Chain A, domain 1"/>
    <property type="match status" value="1"/>
</dbReference>
<dbReference type="Gene3D" id="3.10.290.10">
    <property type="entry name" value="RNA-binding S4 domain"/>
    <property type="match status" value="1"/>
</dbReference>
<dbReference type="HAMAP" id="MF_01306_B">
    <property type="entry name" value="Ribosomal_uS4_B"/>
    <property type="match status" value="1"/>
</dbReference>
<dbReference type="InterPro" id="IPR022801">
    <property type="entry name" value="Ribosomal_uS4"/>
</dbReference>
<dbReference type="InterPro" id="IPR005709">
    <property type="entry name" value="Ribosomal_uS4_bac-type"/>
</dbReference>
<dbReference type="InterPro" id="IPR018079">
    <property type="entry name" value="Ribosomal_uS4_CS"/>
</dbReference>
<dbReference type="InterPro" id="IPR001912">
    <property type="entry name" value="Ribosomal_uS4_N"/>
</dbReference>
<dbReference type="InterPro" id="IPR002942">
    <property type="entry name" value="S4_RNA-bd"/>
</dbReference>
<dbReference type="InterPro" id="IPR036986">
    <property type="entry name" value="S4_RNA-bd_sf"/>
</dbReference>
<dbReference type="NCBIfam" id="NF003717">
    <property type="entry name" value="PRK05327.1"/>
    <property type="match status" value="1"/>
</dbReference>
<dbReference type="NCBIfam" id="TIGR01017">
    <property type="entry name" value="rpsD_bact"/>
    <property type="match status" value="1"/>
</dbReference>
<dbReference type="PANTHER" id="PTHR11831">
    <property type="entry name" value="30S 40S RIBOSOMAL PROTEIN"/>
    <property type="match status" value="1"/>
</dbReference>
<dbReference type="PANTHER" id="PTHR11831:SF4">
    <property type="entry name" value="SMALL RIBOSOMAL SUBUNIT PROTEIN US4M"/>
    <property type="match status" value="1"/>
</dbReference>
<dbReference type="Pfam" id="PF00163">
    <property type="entry name" value="Ribosomal_S4"/>
    <property type="match status" value="1"/>
</dbReference>
<dbReference type="Pfam" id="PF01479">
    <property type="entry name" value="S4"/>
    <property type="match status" value="1"/>
</dbReference>
<dbReference type="SMART" id="SM01390">
    <property type="entry name" value="Ribosomal_S4"/>
    <property type="match status" value="1"/>
</dbReference>
<dbReference type="SMART" id="SM00363">
    <property type="entry name" value="S4"/>
    <property type="match status" value="1"/>
</dbReference>
<dbReference type="SUPFAM" id="SSF55174">
    <property type="entry name" value="Alpha-L RNA-binding motif"/>
    <property type="match status" value="1"/>
</dbReference>
<dbReference type="PROSITE" id="PS00632">
    <property type="entry name" value="RIBOSOMAL_S4"/>
    <property type="match status" value="1"/>
</dbReference>
<dbReference type="PROSITE" id="PS50889">
    <property type="entry name" value="S4"/>
    <property type="match status" value="1"/>
</dbReference>
<evidence type="ECO:0000250" key="1"/>
<evidence type="ECO:0000305" key="2"/>
<keyword id="KW-0150">Chloroplast</keyword>
<keyword id="KW-0934">Plastid</keyword>
<keyword id="KW-0687">Ribonucleoprotein</keyword>
<keyword id="KW-0689">Ribosomal protein</keyword>
<keyword id="KW-0694">RNA-binding</keyword>
<keyword id="KW-0699">rRNA-binding</keyword>
<gene>
    <name type="primary">rps4</name>
</gene>
<sequence>MSRYRGPRVRIIRRLGVLPGLTNKTPQLKSSSPNQSAAKKISQYRIRLEEKQKLRFHYGITERQLLNYVRIARKAKGSTGQVLLQLLEMRLDNIVFRLGMAPTIPGARQLVNHRHVLVNDCIVDIPSYRCKPEDSITVKNRQKSQAIITKNIDFSQKAKVPNHLTFDSTQKKGLVNQILDRESIGLKINELLVVEYYSRQA</sequence>